<name>PROFI_OLEEU</name>
<protein>
    <recommendedName>
        <fullName>Profilin-1</fullName>
    </recommendedName>
    <alternativeName>
        <fullName>Pollen allergen Ole e 2</fullName>
    </alternativeName>
    <allergenName>Ole e 2</allergenName>
</protein>
<feature type="initiator methionine" description="Removed" evidence="1">
    <location>
        <position position="1"/>
    </location>
</feature>
<feature type="chain" id="PRO_0000424974" description="Profilin-1">
    <location>
        <begin position="2"/>
        <end position="134"/>
    </location>
</feature>
<feature type="short sequence motif" description="Involved in PIP2 interaction">
    <location>
        <begin position="84"/>
        <end position="100"/>
    </location>
</feature>
<feature type="modified residue" description="Phosphothreonine" evidence="1">
    <location>
        <position position="114"/>
    </location>
</feature>
<feature type="disulfide bond" evidence="3">
    <location>
        <begin position="13"/>
        <end position="118"/>
    </location>
</feature>
<organism>
    <name type="scientific">Olea europaea</name>
    <name type="common">Common olive</name>
    <dbReference type="NCBI Taxonomy" id="4146"/>
    <lineage>
        <taxon>Eukaryota</taxon>
        <taxon>Viridiplantae</taxon>
        <taxon>Streptophyta</taxon>
        <taxon>Embryophyta</taxon>
        <taxon>Tracheophyta</taxon>
        <taxon>Spermatophyta</taxon>
        <taxon>Magnoliopsida</taxon>
        <taxon>eudicotyledons</taxon>
        <taxon>Gunneridae</taxon>
        <taxon>Pentapetalae</taxon>
        <taxon>asterids</taxon>
        <taxon>lamiids</taxon>
        <taxon>Lamiales</taxon>
        <taxon>Oleaceae</taxon>
        <taxon>Oleeae</taxon>
        <taxon>Olea</taxon>
    </lineage>
</organism>
<keyword id="KW-0009">Actin-binding</keyword>
<keyword id="KW-0020">Allergen</keyword>
<keyword id="KW-0963">Cytoplasm</keyword>
<keyword id="KW-0206">Cytoskeleton</keyword>
<keyword id="KW-1015">Disulfide bond</keyword>
<keyword id="KW-0597">Phosphoprotein</keyword>
<dbReference type="EMBL" id="DQ138325">
    <property type="protein sequence ID" value="AAZ30403.1"/>
    <property type="molecule type" value="mRNA"/>
</dbReference>
<dbReference type="SMR" id="P0DKD3"/>
<dbReference type="GO" id="GO:0005938">
    <property type="term" value="C:cell cortex"/>
    <property type="evidence" value="ECO:0007669"/>
    <property type="project" value="TreeGrafter"/>
</dbReference>
<dbReference type="GO" id="GO:0005856">
    <property type="term" value="C:cytoskeleton"/>
    <property type="evidence" value="ECO:0007669"/>
    <property type="project" value="UniProtKB-SubCell"/>
</dbReference>
<dbReference type="GO" id="GO:0003785">
    <property type="term" value="F:actin monomer binding"/>
    <property type="evidence" value="ECO:0007669"/>
    <property type="project" value="TreeGrafter"/>
</dbReference>
<dbReference type="CDD" id="cd00148">
    <property type="entry name" value="PROF"/>
    <property type="match status" value="1"/>
</dbReference>
<dbReference type="FunFam" id="3.30.450.30:FF:000001">
    <property type="entry name" value="Profilin"/>
    <property type="match status" value="1"/>
</dbReference>
<dbReference type="Gene3D" id="3.30.450.30">
    <property type="entry name" value="Dynein light chain 2a, cytoplasmic"/>
    <property type="match status" value="1"/>
</dbReference>
<dbReference type="InterPro" id="IPR048278">
    <property type="entry name" value="PFN"/>
</dbReference>
<dbReference type="InterPro" id="IPR005455">
    <property type="entry name" value="PFN_euk"/>
</dbReference>
<dbReference type="InterPro" id="IPR036140">
    <property type="entry name" value="PFN_sf"/>
</dbReference>
<dbReference type="InterPro" id="IPR027310">
    <property type="entry name" value="Profilin_CS"/>
</dbReference>
<dbReference type="PANTHER" id="PTHR11604">
    <property type="entry name" value="PROFILIN"/>
    <property type="match status" value="1"/>
</dbReference>
<dbReference type="PANTHER" id="PTHR11604:SF25">
    <property type="entry name" value="PROFILIN-5"/>
    <property type="match status" value="1"/>
</dbReference>
<dbReference type="Pfam" id="PF00235">
    <property type="entry name" value="Profilin"/>
    <property type="match status" value="1"/>
</dbReference>
<dbReference type="PRINTS" id="PR00392">
    <property type="entry name" value="PROFILIN"/>
</dbReference>
<dbReference type="PRINTS" id="PR01640">
    <property type="entry name" value="PROFILINPLNT"/>
</dbReference>
<dbReference type="SMART" id="SM00392">
    <property type="entry name" value="PROF"/>
    <property type="match status" value="1"/>
</dbReference>
<dbReference type="SUPFAM" id="SSF55770">
    <property type="entry name" value="Profilin (actin-binding protein)"/>
    <property type="match status" value="1"/>
</dbReference>
<dbReference type="PROSITE" id="PS00414">
    <property type="entry name" value="PROFILIN"/>
    <property type="match status" value="1"/>
</dbReference>
<accession>P0DKD3</accession>
<accession>A4GCR3</accession>
<sequence>MSWQAYVDDHLMCDIEGHEGHRLTAAAIVGHDGSVWAQSATFPQFKPEEMNGIMTDFNEPGHLAPTGLHLGGTKYMVIQGEAGAVIRGKKGSGGITIKKTGQALVFGIYEEPVTPGQCNMVVERLGDYLLEQGL</sequence>
<comment type="function">
    <text evidence="1">Binds to actin and affects the structure of the cytoskeleton. At high concentrations, profilin prevents the polymerization of actin, whereas it enhances it at low concentrations (By similarity).</text>
</comment>
<comment type="subunit">
    <text evidence="1">Occurs in many kinds of cells as a complex with monomeric actin in a 1:1 ratio.</text>
</comment>
<comment type="subcellular location">
    <subcellularLocation>
        <location evidence="1">Cytoplasm</location>
        <location evidence="1">Cytoskeleton</location>
    </subcellularLocation>
</comment>
<comment type="PTM">
    <text evidence="1">Phosphorylated by MAP kinases.</text>
</comment>
<comment type="polymorphism">
    <text>Several isoforms of the allergen exist due to polymorphism.</text>
</comment>
<comment type="allergen">
    <text>Causes an allergic reaction in human.</text>
</comment>
<comment type="miscellaneous">
    <text evidence="3">The variability of the residues taking part of IgE-binding epitopes might be responsible of the difference in cross-reactivity among olive pollen cultivars, and between distantly related pollen species, leading to a variable range of allergy reactions among atopic patients.</text>
</comment>
<comment type="similarity">
    <text evidence="2">Belongs to the profilin family.</text>
</comment>
<evidence type="ECO:0000250" key="1"/>
<evidence type="ECO:0000305" key="2"/>
<evidence type="ECO:0000305" key="3">
    <source>
    </source>
</evidence>
<proteinExistence type="evidence at protein level"/>
<reference key="1">
    <citation type="journal article" date="2012" name="PLoS ONE">
        <title>Characterization of profilin polymorphism in pollen with a focus on multifunctionality.</title>
        <authorList>
            <person name="Jimenez-Lopez J.C."/>
            <person name="Morales S."/>
            <person name="Castro A.J."/>
            <person name="Volkmann D."/>
            <person name="Rodriguez-Garcia M.I."/>
            <person name="Alche Jde D."/>
        </authorList>
    </citation>
    <scope>NUCLEOTIDE SEQUENCE [MRNA]</scope>
    <scope>POLYMORPHISM</scope>
    <source>
        <strain>cv. Manzanilla de Sevilla</strain>
        <tissue>Pollen</tissue>
    </source>
</reference>
<reference key="2">
    <citation type="journal article" date="2013" name="PLoS ONE">
        <title>Analysis of the effects of polymorphism on pollen profilin structural functionality and the generation of conformational, T- and B-cell epitopes.</title>
        <authorList>
            <person name="Jimenez-Lopez J.C."/>
            <person name="Rodriguez-Garcia M.I."/>
            <person name="Alche J.D."/>
        </authorList>
    </citation>
    <scope>3D-STRUCTURE MODELING</scope>
    <scope>DISULFIDE BOND</scope>
</reference>